<accession>B0BNK7</accession>
<reference evidence="11" key="1">
    <citation type="submission" date="2005-09" db="EMBL/GenBank/DDBJ databases">
        <authorList>
            <person name="Mural R.J."/>
            <person name="Adams M.D."/>
            <person name="Myers E.W."/>
            <person name="Smith H.O."/>
            <person name="Venter J.C."/>
        </authorList>
    </citation>
    <scope>NUCLEOTIDE SEQUENCE [LARGE SCALE GENOMIC DNA]</scope>
</reference>
<reference evidence="10" key="2">
    <citation type="journal article" date="2004" name="Genome Res.">
        <title>The status, quality, and expansion of the NIH full-length cDNA project: the Mammalian Gene Collection (MGC).</title>
        <authorList>
            <consortium name="The MGC Project Team"/>
        </authorList>
    </citation>
    <scope>NUCLEOTIDE SEQUENCE [LARGE SCALE MRNA]</scope>
    <source>
        <tissue evidence="10">Prostate</tissue>
    </source>
</reference>
<reference evidence="9" key="3">
    <citation type="journal article" date="2008" name="J. Biol. Chem.">
        <title>The SALM family of adhesion-like molecules forms heteromeric and homomeric complexes.</title>
        <authorList>
            <person name="Seabold G.K."/>
            <person name="Wang P.Y."/>
            <person name="Chang K."/>
            <person name="Wang C.Y."/>
            <person name="Wang Y.X."/>
            <person name="Petralia R.S."/>
            <person name="Wenthold R.J."/>
        </authorList>
    </citation>
    <scope>INTERACTION WITH LRFN1; LRFN2; LRFN3; LRFN4 AND LRFN5</scope>
    <scope>SUBCELLULAR LOCATION</scope>
</reference>
<dbReference type="EMBL" id="CH473979">
    <property type="protein sequence ID" value="EDM07768.1"/>
    <property type="molecule type" value="Genomic_DNA"/>
</dbReference>
<dbReference type="EMBL" id="BC158862">
    <property type="protein sequence ID" value="AAI58863.1"/>
    <property type="molecule type" value="mRNA"/>
</dbReference>
<dbReference type="RefSeq" id="NP_001100972.1">
    <property type="nucleotide sequence ID" value="NM_001107502.1"/>
</dbReference>
<dbReference type="RefSeq" id="XP_006228833.1">
    <property type="nucleotide sequence ID" value="XM_006228771.4"/>
</dbReference>
<dbReference type="SMR" id="B0BNK7"/>
<dbReference type="FunCoup" id="B0BNK7">
    <property type="interactions" value="985"/>
</dbReference>
<dbReference type="STRING" id="10116.ENSRNOP00000028275"/>
<dbReference type="GlyCosmos" id="B0BNK7">
    <property type="glycosylation" value="3 sites, No reported glycans"/>
</dbReference>
<dbReference type="GlyGen" id="B0BNK7">
    <property type="glycosylation" value="3 sites"/>
</dbReference>
<dbReference type="PhosphoSitePlus" id="B0BNK7"/>
<dbReference type="PaxDb" id="10116-ENSRNOP00000028275"/>
<dbReference type="Ensembl" id="ENSRNOT00000028275.6">
    <property type="protein sequence ID" value="ENSRNOP00000028275.4"/>
    <property type="gene ID" value="ENSRNOG00000020839.6"/>
</dbReference>
<dbReference type="GeneID" id="308495"/>
<dbReference type="KEGG" id="rno:308495"/>
<dbReference type="UCSC" id="RGD:1305567">
    <property type="organism name" value="rat"/>
</dbReference>
<dbReference type="AGR" id="RGD:1305567"/>
<dbReference type="CTD" id="79414"/>
<dbReference type="RGD" id="1305567">
    <property type="gene designation" value="Lrfn3"/>
</dbReference>
<dbReference type="eggNOG" id="KOG0619">
    <property type="taxonomic scope" value="Eukaryota"/>
</dbReference>
<dbReference type="GeneTree" id="ENSGT00940000161203"/>
<dbReference type="HOGENOM" id="CLU_016998_1_0_1"/>
<dbReference type="InParanoid" id="B0BNK7"/>
<dbReference type="OMA" id="EQEYKQC"/>
<dbReference type="OrthoDB" id="1394818at2759"/>
<dbReference type="PhylomeDB" id="B0BNK7"/>
<dbReference type="TreeFam" id="TF350185"/>
<dbReference type="Reactome" id="R-RNO-8849932">
    <property type="pathway name" value="Synaptic adhesion-like molecules"/>
</dbReference>
<dbReference type="PRO" id="PR:B0BNK7"/>
<dbReference type="Proteomes" id="UP000002494">
    <property type="component" value="Chromosome 1"/>
</dbReference>
<dbReference type="Proteomes" id="UP000234681">
    <property type="component" value="Chromosome 1"/>
</dbReference>
<dbReference type="Bgee" id="ENSRNOG00000020839">
    <property type="expression patterns" value="Expressed in frontal cortex and 17 other cell types or tissues"/>
</dbReference>
<dbReference type="GO" id="GO:0030424">
    <property type="term" value="C:axon"/>
    <property type="evidence" value="ECO:0007669"/>
    <property type="project" value="UniProtKB-SubCell"/>
</dbReference>
<dbReference type="GO" id="GO:0009986">
    <property type="term" value="C:cell surface"/>
    <property type="evidence" value="ECO:0000266"/>
    <property type="project" value="RGD"/>
</dbReference>
<dbReference type="GO" id="GO:0030425">
    <property type="term" value="C:dendrite"/>
    <property type="evidence" value="ECO:0007669"/>
    <property type="project" value="UniProtKB-SubCell"/>
</dbReference>
<dbReference type="GO" id="GO:0098978">
    <property type="term" value="C:glutamatergic synapse"/>
    <property type="evidence" value="ECO:0000314"/>
    <property type="project" value="SynGO"/>
</dbReference>
<dbReference type="GO" id="GO:0098839">
    <property type="term" value="C:postsynaptic density membrane"/>
    <property type="evidence" value="ECO:0000314"/>
    <property type="project" value="SynGO"/>
</dbReference>
<dbReference type="GO" id="GO:0099634">
    <property type="term" value="C:postsynaptic specialization membrane"/>
    <property type="evidence" value="ECO:0000314"/>
    <property type="project" value="SynGO"/>
</dbReference>
<dbReference type="GO" id="GO:0048787">
    <property type="term" value="C:presynaptic active zone membrane"/>
    <property type="evidence" value="ECO:0000314"/>
    <property type="project" value="SynGO"/>
</dbReference>
<dbReference type="GO" id="GO:1905606">
    <property type="term" value="P:regulation of presynapse assembly"/>
    <property type="evidence" value="ECO:0000314"/>
    <property type="project" value="SynGO"/>
</dbReference>
<dbReference type="GO" id="GO:0099179">
    <property type="term" value="P:regulation of synaptic membrane adhesion"/>
    <property type="evidence" value="ECO:0000314"/>
    <property type="project" value="SynGO"/>
</dbReference>
<dbReference type="GO" id="GO:0099560">
    <property type="term" value="P:synaptic membrane adhesion"/>
    <property type="evidence" value="ECO:0000314"/>
    <property type="project" value="SynGO"/>
</dbReference>
<dbReference type="CDD" id="cd00063">
    <property type="entry name" value="FN3"/>
    <property type="match status" value="1"/>
</dbReference>
<dbReference type="FunFam" id="2.60.40.10:FF:000235">
    <property type="entry name" value="Leucine-rich repeat and fibronectin type III domain-containing 2"/>
    <property type="match status" value="1"/>
</dbReference>
<dbReference type="FunFam" id="2.60.40.10:FF:000091">
    <property type="entry name" value="Leucine-rich repeat and fibronectin type III domain-containing protein 1"/>
    <property type="match status" value="1"/>
</dbReference>
<dbReference type="FunFam" id="3.80.10.10:FF:000019">
    <property type="entry name" value="leucine-rich repeat and fibronectin type III domain-containing protein 1"/>
    <property type="match status" value="1"/>
</dbReference>
<dbReference type="FunFam" id="3.80.10.10:FF:000209">
    <property type="entry name" value="leucine-rich repeat and fibronectin type-III domain-containing protein 3"/>
    <property type="match status" value="1"/>
</dbReference>
<dbReference type="Gene3D" id="2.60.40.10">
    <property type="entry name" value="Immunoglobulins"/>
    <property type="match status" value="2"/>
</dbReference>
<dbReference type="Gene3D" id="3.80.10.10">
    <property type="entry name" value="Ribonuclease Inhibitor"/>
    <property type="match status" value="2"/>
</dbReference>
<dbReference type="InterPro" id="IPR000483">
    <property type="entry name" value="Cys-rich_flank_reg_C"/>
</dbReference>
<dbReference type="InterPro" id="IPR003961">
    <property type="entry name" value="FN3_dom"/>
</dbReference>
<dbReference type="InterPro" id="IPR036116">
    <property type="entry name" value="FN3_sf"/>
</dbReference>
<dbReference type="InterPro" id="IPR007110">
    <property type="entry name" value="Ig-like_dom"/>
</dbReference>
<dbReference type="InterPro" id="IPR036179">
    <property type="entry name" value="Ig-like_dom_sf"/>
</dbReference>
<dbReference type="InterPro" id="IPR013783">
    <property type="entry name" value="Ig-like_fold"/>
</dbReference>
<dbReference type="InterPro" id="IPR013098">
    <property type="entry name" value="Ig_I-set"/>
</dbReference>
<dbReference type="InterPro" id="IPR003599">
    <property type="entry name" value="Ig_sub"/>
</dbReference>
<dbReference type="InterPro" id="IPR003598">
    <property type="entry name" value="Ig_sub2"/>
</dbReference>
<dbReference type="InterPro" id="IPR001611">
    <property type="entry name" value="Leu-rich_rpt"/>
</dbReference>
<dbReference type="InterPro" id="IPR003591">
    <property type="entry name" value="Leu-rich_rpt_typical-subtyp"/>
</dbReference>
<dbReference type="InterPro" id="IPR050467">
    <property type="entry name" value="LRFN"/>
</dbReference>
<dbReference type="InterPro" id="IPR032675">
    <property type="entry name" value="LRR_dom_sf"/>
</dbReference>
<dbReference type="PANTHER" id="PTHR45842:SF5">
    <property type="entry name" value="LEUCINE-RICH REPEAT AND FIBRONECTIN TYPE-III DOMAIN-CONTAINING PROTEIN 3"/>
    <property type="match status" value="1"/>
</dbReference>
<dbReference type="PANTHER" id="PTHR45842">
    <property type="entry name" value="SYNAPTIC ADHESION-LIKE MOLECULE SALM"/>
    <property type="match status" value="1"/>
</dbReference>
<dbReference type="Pfam" id="PF00041">
    <property type="entry name" value="fn3"/>
    <property type="match status" value="1"/>
</dbReference>
<dbReference type="Pfam" id="PF07679">
    <property type="entry name" value="I-set"/>
    <property type="match status" value="1"/>
</dbReference>
<dbReference type="Pfam" id="PF13855">
    <property type="entry name" value="LRR_8"/>
    <property type="match status" value="2"/>
</dbReference>
<dbReference type="SMART" id="SM00409">
    <property type="entry name" value="IG"/>
    <property type="match status" value="1"/>
</dbReference>
<dbReference type="SMART" id="SM00408">
    <property type="entry name" value="IGc2"/>
    <property type="match status" value="1"/>
</dbReference>
<dbReference type="SMART" id="SM00369">
    <property type="entry name" value="LRR_TYP"/>
    <property type="match status" value="6"/>
</dbReference>
<dbReference type="SMART" id="SM00082">
    <property type="entry name" value="LRRCT"/>
    <property type="match status" value="1"/>
</dbReference>
<dbReference type="SUPFAM" id="SSF49265">
    <property type="entry name" value="Fibronectin type III"/>
    <property type="match status" value="1"/>
</dbReference>
<dbReference type="SUPFAM" id="SSF48726">
    <property type="entry name" value="Immunoglobulin"/>
    <property type="match status" value="1"/>
</dbReference>
<dbReference type="SUPFAM" id="SSF52058">
    <property type="entry name" value="L domain-like"/>
    <property type="match status" value="1"/>
</dbReference>
<dbReference type="PROSITE" id="PS50853">
    <property type="entry name" value="FN3"/>
    <property type="match status" value="1"/>
</dbReference>
<dbReference type="PROSITE" id="PS50835">
    <property type="entry name" value="IG_LIKE"/>
    <property type="match status" value="1"/>
</dbReference>
<proteinExistence type="evidence at protein level"/>
<evidence type="ECO:0000250" key="1"/>
<evidence type="ECO:0000250" key="2">
    <source>
        <dbReference type="UniProtKB" id="Q8BLY3"/>
    </source>
</evidence>
<evidence type="ECO:0000255" key="3"/>
<evidence type="ECO:0000255" key="4">
    <source>
        <dbReference type="PROSITE-ProRule" id="PRU00114"/>
    </source>
</evidence>
<evidence type="ECO:0000255" key="5">
    <source>
        <dbReference type="PROSITE-ProRule" id="PRU00316"/>
    </source>
</evidence>
<evidence type="ECO:0000256" key="6">
    <source>
        <dbReference type="SAM" id="MobiDB-lite"/>
    </source>
</evidence>
<evidence type="ECO:0000269" key="7">
    <source>
    </source>
</evidence>
<evidence type="ECO:0000303" key="8">
    <source>
    </source>
</evidence>
<evidence type="ECO:0000305" key="9"/>
<evidence type="ECO:0000312" key="10">
    <source>
        <dbReference type="EMBL" id="AAI58863.1"/>
    </source>
</evidence>
<evidence type="ECO:0000312" key="11">
    <source>
        <dbReference type="EMBL" id="EDM07768.1"/>
    </source>
</evidence>
<evidence type="ECO:0000312" key="12">
    <source>
        <dbReference type="RGD" id="1305567"/>
    </source>
</evidence>
<protein>
    <recommendedName>
        <fullName>Leucine-rich repeat and fibronectin type-III domain-containing protein 3</fullName>
    </recommendedName>
    <alternativeName>
        <fullName evidence="8">Synaptic adhesion-like molecule 4</fullName>
    </alternativeName>
</protein>
<feature type="signal peptide" evidence="3">
    <location>
        <begin position="1"/>
        <end position="16"/>
    </location>
</feature>
<feature type="chain" id="PRO_0000391358" description="Leucine-rich repeat and fibronectin type-III domain-containing protein 3" evidence="3">
    <location>
        <begin position="17"/>
        <end position="626"/>
    </location>
</feature>
<feature type="topological domain" description="Extracellular" evidence="3">
    <location>
        <begin position="17"/>
        <end position="539"/>
    </location>
</feature>
<feature type="transmembrane region" description="Helical" evidence="3">
    <location>
        <begin position="540"/>
        <end position="560"/>
    </location>
</feature>
<feature type="topological domain" description="Cytoplasmic" evidence="3">
    <location>
        <begin position="561"/>
        <end position="626"/>
    </location>
</feature>
<feature type="domain" description="LRRNT">
    <location>
        <begin position="19"/>
        <end position="59"/>
    </location>
</feature>
<feature type="repeat" description="LRR 1">
    <location>
        <begin position="84"/>
        <end position="105"/>
    </location>
</feature>
<feature type="repeat" description="LRR 2">
    <location>
        <begin position="108"/>
        <end position="129"/>
    </location>
</feature>
<feature type="repeat" description="LRR 3">
    <location>
        <begin position="132"/>
        <end position="153"/>
    </location>
</feature>
<feature type="repeat" description="LRR 4">
    <location>
        <begin position="157"/>
        <end position="178"/>
    </location>
</feature>
<feature type="repeat" description="LRR 5">
    <location>
        <begin position="181"/>
        <end position="202"/>
    </location>
</feature>
<feature type="repeat" description="LRR 6">
    <location>
        <begin position="205"/>
        <end position="226"/>
    </location>
</feature>
<feature type="domain" description="LRRCT">
    <location>
        <begin position="249"/>
        <end position="295"/>
    </location>
</feature>
<feature type="domain" description="Ig-like" evidence="3">
    <location>
        <begin position="295"/>
        <end position="382"/>
    </location>
</feature>
<feature type="domain" description="Fibronectin type-III 1" evidence="5">
    <location>
        <begin position="308"/>
        <end position="395"/>
    </location>
</feature>
<feature type="domain" description="Fibronectin type-III 2" evidence="5">
    <location>
        <begin position="425"/>
        <end position="523"/>
    </location>
</feature>
<feature type="region of interest" description="Disordered" evidence="6">
    <location>
        <begin position="382"/>
        <end position="423"/>
    </location>
</feature>
<feature type="compositionally biased region" description="Low complexity" evidence="6">
    <location>
        <begin position="406"/>
        <end position="423"/>
    </location>
</feature>
<feature type="glycosylation site" description="N-linked (GlcNAc...) asparagine" evidence="3">
    <location>
        <position position="339"/>
    </location>
</feature>
<feature type="glycosylation site" description="N-linked (GlcNAc...) asparagine" evidence="3">
    <location>
        <position position="348"/>
    </location>
</feature>
<feature type="glycosylation site" description="N-linked (GlcNAc...) asparagine" evidence="3">
    <location>
        <position position="393"/>
    </location>
</feature>
<feature type="disulfide bond" evidence="4">
    <location>
        <begin position="317"/>
        <end position="366"/>
    </location>
</feature>
<name>LRFN3_RAT</name>
<gene>
    <name evidence="10 12" type="primary">Lrfn3</name>
    <name evidence="8" type="synonym">Salm4</name>
</gene>
<sequence length="626" mass="66068">MAVLPLLLCLLPLAPASSPPQPATSSPCPRRCRCQTQSLPLSVLCPGAGLLFVPPSLDRRAAELRLADNFIAAVRRRDLANMTGLLHLSLSRNTIRHVAAGAFADLRALRALHLDGNRLTSLGEGQLRGLVNLRHLILSNNQLAALAAGALDDCAETLEDLDLSYNNLEQLPWEALGRLGNVNTLGLDHNLLASVPAGAFSRLHKLARLDMTSNRLTTIPPDPLFSRLPLLARPRGSPASALVLAFGGNPLHCNCELVWLRRLAREDDLEACASPPALGGRYFWAVGEEEFVCEPPVVTHRSPPLAVPAGRPAALRCRAVGDPEPRVRWVSPQGRLLGNSSRARAFPNGTLELLVTEPEDGGTFTCIAANAAGEATAAVELTVGPPPPPQLANSTSCDPPRDGEPDALTPPSAASASAKVADTVAPTDRGVQVTEHGATAALVQWPDQRPVPGIRMYQIQYNSSADDILVYRMIPADSRSFLLTDLASGRTYDLCVLAVYEDSATGLTATRPVGCARFSTEPALRPCAAPHAPFLGGTMIIALGGVIVASVLVFIFVLLLRYKVHGVQPPGKAKATAPVSSVCSQTNGALGPVPSAPAPEPAAPRAHTVVQLDCEPWGPSHEPAGP</sequence>
<organism>
    <name type="scientific">Rattus norvegicus</name>
    <name type="common">Rat</name>
    <dbReference type="NCBI Taxonomy" id="10116"/>
    <lineage>
        <taxon>Eukaryota</taxon>
        <taxon>Metazoa</taxon>
        <taxon>Chordata</taxon>
        <taxon>Craniata</taxon>
        <taxon>Vertebrata</taxon>
        <taxon>Euteleostomi</taxon>
        <taxon>Mammalia</taxon>
        <taxon>Eutheria</taxon>
        <taxon>Euarchontoglires</taxon>
        <taxon>Glires</taxon>
        <taxon>Rodentia</taxon>
        <taxon>Myomorpha</taxon>
        <taxon>Muroidea</taxon>
        <taxon>Muridae</taxon>
        <taxon>Murinae</taxon>
        <taxon>Rattus</taxon>
    </lineage>
</organism>
<comment type="function">
    <text evidence="1">Cell adhesion molecule that mediates homophilic cell-cell adhesion in a Ca(2+)-independent manner. Promotes neurite outgrowth in hippocampal neurons (By similarity).</text>
</comment>
<comment type="subunit">
    <text evidence="1">Can form heteromeric complexes with LRFN1, LRFN2, LRFN4 and LRFN5. Able to form homomeric complexes across cell junctions, between adjacent cells. Does not interact with DLG4 (By similarity).</text>
</comment>
<comment type="subcellular location">
    <subcellularLocation>
        <location evidence="7">Cell membrane</location>
        <topology evidence="7">Single-pass type I membrane protein</topology>
    </subcellularLocation>
    <subcellularLocation>
        <location evidence="7">Cell projection</location>
        <location evidence="7">Axon</location>
    </subcellularLocation>
    <subcellularLocation>
        <location evidence="7">Cell projection</location>
        <location evidence="7">Dendrite</location>
    </subcellularLocation>
    <subcellularLocation>
        <location evidence="7">Synapse</location>
    </subcellularLocation>
    <subcellularLocation>
        <location evidence="7">Presynaptic cell membrane</location>
    </subcellularLocation>
    <subcellularLocation>
        <location evidence="7">Postsynaptic cell membrane</location>
    </subcellularLocation>
    <text evidence="3 7">Detected also in intracellular vesicular and tubovesicular structures and in membranes of cell soma. On overexpression, detected throughout hippocampal neurons in soma, axons, dendrites and growth cones.</text>
</comment>
<comment type="tissue specificity">
    <text evidence="7">Expressed in brain. Within brain, expressed in hippocampus, cerebellum, olfactory bulb and forebrain (at protein level).</text>
</comment>
<comment type="domain">
    <text>Lacks a cytoplasmic PDZ-binding domain, which has been implicated in function of related LRFN proteins.</text>
</comment>
<comment type="PTM">
    <text evidence="2">N-glycosylated.</text>
</comment>
<comment type="similarity">
    <text evidence="3">Belongs to the LRFN family.</text>
</comment>
<keyword id="KW-0130">Cell adhesion</keyword>
<keyword id="KW-1003">Cell membrane</keyword>
<keyword id="KW-0966">Cell projection</keyword>
<keyword id="KW-1015">Disulfide bond</keyword>
<keyword id="KW-0325">Glycoprotein</keyword>
<keyword id="KW-0393">Immunoglobulin domain</keyword>
<keyword id="KW-0433">Leucine-rich repeat</keyword>
<keyword id="KW-0472">Membrane</keyword>
<keyword id="KW-0628">Postsynaptic cell membrane</keyword>
<keyword id="KW-1185">Reference proteome</keyword>
<keyword id="KW-0677">Repeat</keyword>
<keyword id="KW-0732">Signal</keyword>
<keyword id="KW-0770">Synapse</keyword>
<keyword id="KW-0812">Transmembrane</keyword>
<keyword id="KW-1133">Transmembrane helix</keyword>